<protein>
    <recommendedName>
        <fullName evidence="1">Aspartate--tRNA(Asp/Asn) ligase</fullName>
        <ecNumber evidence="1">6.1.1.23</ecNumber>
    </recommendedName>
    <alternativeName>
        <fullName evidence="1">Aspartyl-tRNA synthetase</fullName>
        <shortName evidence="1">AspRS</shortName>
    </alternativeName>
    <alternativeName>
        <fullName evidence="1">Non-discriminating aspartyl-tRNA synthetase</fullName>
        <shortName evidence="1">ND-AspRS</shortName>
    </alternativeName>
</protein>
<keyword id="KW-0030">Aminoacyl-tRNA synthetase</keyword>
<keyword id="KW-0067">ATP-binding</keyword>
<keyword id="KW-0963">Cytoplasm</keyword>
<keyword id="KW-0436">Ligase</keyword>
<keyword id="KW-0547">Nucleotide-binding</keyword>
<keyword id="KW-0648">Protein biosynthesis</keyword>
<organism>
    <name type="scientific">Chlamydia trachomatis serovar A (strain ATCC VR-571B / DSM 19440 / HAR-13)</name>
    <dbReference type="NCBI Taxonomy" id="315277"/>
    <lineage>
        <taxon>Bacteria</taxon>
        <taxon>Pseudomonadati</taxon>
        <taxon>Chlamydiota</taxon>
        <taxon>Chlamydiia</taxon>
        <taxon>Chlamydiales</taxon>
        <taxon>Chlamydiaceae</taxon>
        <taxon>Chlamydia/Chlamydophila group</taxon>
        <taxon>Chlamydia</taxon>
    </lineage>
</organism>
<feature type="chain" id="PRO_0000235517" description="Aspartate--tRNA(Asp/Asn) ligase">
    <location>
        <begin position="1"/>
        <end position="582"/>
    </location>
</feature>
<feature type="region of interest" description="Aspartate" evidence="1">
    <location>
        <begin position="201"/>
        <end position="204"/>
    </location>
</feature>
<feature type="binding site" evidence="1">
    <location>
        <position position="177"/>
    </location>
    <ligand>
        <name>L-aspartate</name>
        <dbReference type="ChEBI" id="CHEBI:29991"/>
    </ligand>
</feature>
<feature type="binding site" evidence="1">
    <location>
        <begin position="223"/>
        <end position="225"/>
    </location>
    <ligand>
        <name>ATP</name>
        <dbReference type="ChEBI" id="CHEBI:30616"/>
    </ligand>
</feature>
<feature type="binding site" evidence="1">
    <location>
        <position position="223"/>
    </location>
    <ligand>
        <name>L-aspartate</name>
        <dbReference type="ChEBI" id="CHEBI:29991"/>
    </ligand>
</feature>
<feature type="binding site" evidence="1">
    <location>
        <position position="232"/>
    </location>
    <ligand>
        <name>ATP</name>
        <dbReference type="ChEBI" id="CHEBI:30616"/>
    </ligand>
</feature>
<feature type="binding site" evidence="1">
    <location>
        <position position="447"/>
    </location>
    <ligand>
        <name>L-aspartate</name>
        <dbReference type="ChEBI" id="CHEBI:29991"/>
    </ligand>
</feature>
<feature type="binding site" evidence="1">
    <location>
        <position position="481"/>
    </location>
    <ligand>
        <name>ATP</name>
        <dbReference type="ChEBI" id="CHEBI:30616"/>
    </ligand>
</feature>
<feature type="binding site" evidence="1">
    <location>
        <position position="488"/>
    </location>
    <ligand>
        <name>L-aspartate</name>
        <dbReference type="ChEBI" id="CHEBI:29991"/>
    </ligand>
</feature>
<feature type="binding site" evidence="1">
    <location>
        <begin position="533"/>
        <end position="536"/>
    </location>
    <ligand>
        <name>ATP</name>
        <dbReference type="ChEBI" id="CHEBI:30616"/>
    </ligand>
</feature>
<feature type="site" description="Important for tRNA non-discrimination" evidence="1">
    <location>
        <position position="32"/>
    </location>
</feature>
<feature type="site" description="Important for tRNA non-discrimination" evidence="1">
    <location>
        <position position="84"/>
    </location>
</feature>
<evidence type="ECO:0000255" key="1">
    <source>
        <dbReference type="HAMAP-Rule" id="MF_00044"/>
    </source>
</evidence>
<sequence>MKYRTHKCNELSLDHVGEHVRLSGWVHRYRNHGGVVFIDLRDCFGITQIVCRQEENPELHQLMDQVRSEWVLCVEGLVCARLEGMENPNLVTGSIEVEVSSLEVLSRAQNLPFSISDEHINVNEELRLTYRYLDMRRGDILDRLMCRHKVMLACRQYLDEQGFTEVVTPILGKSTPEGARDYLVPSRIYPGNFYALPQSPQLFKQILMVGGLDRYFQIATCFRDEDLRADRQPEFTQIDMEMSFGGPEDLFPVVEELVARLFAVKGIELKAPFLRMTYQEAKDSYGTDKPDLRFGLRLKNCCEYARKFTFSIFLDQLAYGGTVKGFCVPGGADMSRKQLDIYTDFVKRYGAMGLVWIKKQDGGVSSNVAKFASEDVFQEMFEAFEAKDQDILLLIAAPEAVANQALDHLRRLIARERQLYDSTQYNFVWITDFPLFAKEEGELCPEHHPFTAPLDEDISLLDSDPFAVRSSSYDLVLNGYEIASGSQRIHNPDLQNKIFALLKLSQESVKEKFGFFIDALSFGTPPHLGIALGLDRIMMVLTGAETIREVIAFPKTQKAGDLMMSAPSEILPIQLKELGLKL</sequence>
<gene>
    <name evidence="1" type="primary">aspS</name>
    <name type="ordered locus">CTA_0592</name>
</gene>
<reference key="1">
    <citation type="journal article" date="2005" name="Infect. Immun.">
        <title>Comparative genomic analysis of Chlamydia trachomatis oculotropic and genitotropic strains.</title>
        <authorList>
            <person name="Carlson J.H."/>
            <person name="Porcella S.F."/>
            <person name="McClarty G."/>
            <person name="Caldwell H.D."/>
        </authorList>
    </citation>
    <scope>NUCLEOTIDE SEQUENCE [LARGE SCALE GENOMIC DNA]</scope>
    <source>
        <strain>ATCC VR-571B / DSM 19440 / HAR-13</strain>
    </source>
</reference>
<accession>Q3KLF5</accession>
<dbReference type="EC" id="6.1.1.23" evidence="1"/>
<dbReference type="EMBL" id="CP000051">
    <property type="protein sequence ID" value="AAX50817.1"/>
    <property type="molecule type" value="Genomic_DNA"/>
</dbReference>
<dbReference type="RefSeq" id="WP_009871906.1">
    <property type="nucleotide sequence ID" value="NC_007429.1"/>
</dbReference>
<dbReference type="SMR" id="Q3KLF5"/>
<dbReference type="KEGG" id="cta:CTA_0592"/>
<dbReference type="HOGENOM" id="CLU_014330_3_2_0"/>
<dbReference type="Proteomes" id="UP000002532">
    <property type="component" value="Chromosome"/>
</dbReference>
<dbReference type="GO" id="GO:0005737">
    <property type="term" value="C:cytoplasm"/>
    <property type="evidence" value="ECO:0007669"/>
    <property type="project" value="UniProtKB-SubCell"/>
</dbReference>
<dbReference type="GO" id="GO:0004815">
    <property type="term" value="F:aspartate-tRNA ligase activity"/>
    <property type="evidence" value="ECO:0007669"/>
    <property type="project" value="UniProtKB-UniRule"/>
</dbReference>
<dbReference type="GO" id="GO:0050560">
    <property type="term" value="F:aspartate-tRNA(Asn) ligase activity"/>
    <property type="evidence" value="ECO:0007669"/>
    <property type="project" value="UniProtKB-EC"/>
</dbReference>
<dbReference type="GO" id="GO:0005524">
    <property type="term" value="F:ATP binding"/>
    <property type="evidence" value="ECO:0007669"/>
    <property type="project" value="UniProtKB-UniRule"/>
</dbReference>
<dbReference type="GO" id="GO:0003676">
    <property type="term" value="F:nucleic acid binding"/>
    <property type="evidence" value="ECO:0007669"/>
    <property type="project" value="InterPro"/>
</dbReference>
<dbReference type="GO" id="GO:0006422">
    <property type="term" value="P:aspartyl-tRNA aminoacylation"/>
    <property type="evidence" value="ECO:0007669"/>
    <property type="project" value="UniProtKB-UniRule"/>
</dbReference>
<dbReference type="CDD" id="cd00777">
    <property type="entry name" value="AspRS_core"/>
    <property type="match status" value="1"/>
</dbReference>
<dbReference type="CDD" id="cd04317">
    <property type="entry name" value="EcAspRS_like_N"/>
    <property type="match status" value="1"/>
</dbReference>
<dbReference type="Gene3D" id="3.30.930.10">
    <property type="entry name" value="Bira Bifunctional Protein, Domain 2"/>
    <property type="match status" value="1"/>
</dbReference>
<dbReference type="Gene3D" id="3.30.1360.30">
    <property type="entry name" value="GAD-like domain"/>
    <property type="match status" value="1"/>
</dbReference>
<dbReference type="Gene3D" id="2.40.50.140">
    <property type="entry name" value="Nucleic acid-binding proteins"/>
    <property type="match status" value="1"/>
</dbReference>
<dbReference type="HAMAP" id="MF_00044">
    <property type="entry name" value="Asp_tRNA_synth_type1"/>
    <property type="match status" value="1"/>
</dbReference>
<dbReference type="InterPro" id="IPR004364">
    <property type="entry name" value="Aa-tRNA-synt_II"/>
</dbReference>
<dbReference type="InterPro" id="IPR006195">
    <property type="entry name" value="aa-tRNA-synth_II"/>
</dbReference>
<dbReference type="InterPro" id="IPR045864">
    <property type="entry name" value="aa-tRNA-synth_II/BPL/LPL"/>
</dbReference>
<dbReference type="InterPro" id="IPR004524">
    <property type="entry name" value="Asp-tRNA-ligase_1"/>
</dbReference>
<dbReference type="InterPro" id="IPR047089">
    <property type="entry name" value="Asp-tRNA-ligase_1_N"/>
</dbReference>
<dbReference type="InterPro" id="IPR002312">
    <property type="entry name" value="Asp/Asn-tRNA-synth_IIb"/>
</dbReference>
<dbReference type="InterPro" id="IPR047090">
    <property type="entry name" value="AspRS_core"/>
</dbReference>
<dbReference type="InterPro" id="IPR004115">
    <property type="entry name" value="GAD-like_sf"/>
</dbReference>
<dbReference type="InterPro" id="IPR029351">
    <property type="entry name" value="GAD_dom"/>
</dbReference>
<dbReference type="InterPro" id="IPR012340">
    <property type="entry name" value="NA-bd_OB-fold"/>
</dbReference>
<dbReference type="InterPro" id="IPR004365">
    <property type="entry name" value="NA-bd_OB_tRNA"/>
</dbReference>
<dbReference type="NCBIfam" id="TIGR00459">
    <property type="entry name" value="aspS_bact"/>
    <property type="match status" value="1"/>
</dbReference>
<dbReference type="NCBIfam" id="NF001750">
    <property type="entry name" value="PRK00476.1"/>
    <property type="match status" value="1"/>
</dbReference>
<dbReference type="PANTHER" id="PTHR22594:SF5">
    <property type="entry name" value="ASPARTATE--TRNA LIGASE, MITOCHONDRIAL"/>
    <property type="match status" value="1"/>
</dbReference>
<dbReference type="PANTHER" id="PTHR22594">
    <property type="entry name" value="ASPARTYL/LYSYL-TRNA SYNTHETASE"/>
    <property type="match status" value="1"/>
</dbReference>
<dbReference type="Pfam" id="PF02938">
    <property type="entry name" value="GAD"/>
    <property type="match status" value="1"/>
</dbReference>
<dbReference type="Pfam" id="PF00152">
    <property type="entry name" value="tRNA-synt_2"/>
    <property type="match status" value="1"/>
</dbReference>
<dbReference type="Pfam" id="PF01336">
    <property type="entry name" value="tRNA_anti-codon"/>
    <property type="match status" value="1"/>
</dbReference>
<dbReference type="PRINTS" id="PR01042">
    <property type="entry name" value="TRNASYNTHASP"/>
</dbReference>
<dbReference type="SUPFAM" id="SSF55681">
    <property type="entry name" value="Class II aaRS and biotin synthetases"/>
    <property type="match status" value="1"/>
</dbReference>
<dbReference type="SUPFAM" id="SSF55261">
    <property type="entry name" value="GAD domain-like"/>
    <property type="match status" value="1"/>
</dbReference>
<dbReference type="SUPFAM" id="SSF50249">
    <property type="entry name" value="Nucleic acid-binding proteins"/>
    <property type="match status" value="1"/>
</dbReference>
<dbReference type="PROSITE" id="PS50862">
    <property type="entry name" value="AA_TRNA_LIGASE_II"/>
    <property type="match status" value="1"/>
</dbReference>
<proteinExistence type="inferred from homology"/>
<comment type="function">
    <text evidence="1">Aspartyl-tRNA synthetase with relaxed tRNA specificity since it is able to aspartylate not only its cognate tRNA(Asp) but also tRNA(Asn). Reaction proceeds in two steps: L-aspartate is first activated by ATP to form Asp-AMP and then transferred to the acceptor end of tRNA(Asp/Asn).</text>
</comment>
<comment type="catalytic activity">
    <reaction evidence="1">
        <text>tRNA(Asx) + L-aspartate + ATP = L-aspartyl-tRNA(Asx) + AMP + diphosphate</text>
        <dbReference type="Rhea" id="RHEA:18349"/>
        <dbReference type="Rhea" id="RHEA-COMP:9710"/>
        <dbReference type="Rhea" id="RHEA-COMP:9711"/>
        <dbReference type="ChEBI" id="CHEBI:29991"/>
        <dbReference type="ChEBI" id="CHEBI:30616"/>
        <dbReference type="ChEBI" id="CHEBI:33019"/>
        <dbReference type="ChEBI" id="CHEBI:78442"/>
        <dbReference type="ChEBI" id="CHEBI:78516"/>
        <dbReference type="ChEBI" id="CHEBI:456215"/>
        <dbReference type="EC" id="6.1.1.23"/>
    </reaction>
</comment>
<comment type="subunit">
    <text evidence="1">Homodimer.</text>
</comment>
<comment type="subcellular location">
    <subcellularLocation>
        <location evidence="1">Cytoplasm</location>
    </subcellularLocation>
</comment>
<comment type="similarity">
    <text evidence="1">Belongs to the class-II aminoacyl-tRNA synthetase family. Type 1 subfamily.</text>
</comment>
<name>SYDND_CHLTA</name>